<feature type="chain" id="PRO_0000134993" description="Nicotinamide-nucleotide adenylyltransferase">
    <location>
        <begin position="1"/>
        <end position="173"/>
    </location>
</feature>
<reference key="1">
    <citation type="journal article" date="2002" name="J. Mol. Microbiol. Biotechnol.">
        <title>The genome of Methanosarcina mazei: evidence for lateral gene transfer between Bacteria and Archaea.</title>
        <authorList>
            <person name="Deppenmeier U."/>
            <person name="Johann A."/>
            <person name="Hartsch T."/>
            <person name="Merkl R."/>
            <person name="Schmitz R.A."/>
            <person name="Martinez-Arias R."/>
            <person name="Henne A."/>
            <person name="Wiezer A."/>
            <person name="Baeumer S."/>
            <person name="Jacobi C."/>
            <person name="Brueggemann H."/>
            <person name="Lienard T."/>
            <person name="Christmann A."/>
            <person name="Boemecke M."/>
            <person name="Steckel S."/>
            <person name="Bhattacharyya A."/>
            <person name="Lykidis A."/>
            <person name="Overbeek R."/>
            <person name="Klenk H.-P."/>
            <person name="Gunsalus R.P."/>
            <person name="Fritz H.-J."/>
            <person name="Gottschalk G."/>
        </authorList>
    </citation>
    <scope>NUCLEOTIDE SEQUENCE [LARGE SCALE GENOMIC DNA]</scope>
    <source>
        <strain>ATCC BAA-159 / DSM 3647 / Goe1 / Go1 / JCM 11833 / OCM 88</strain>
    </source>
</reference>
<organism>
    <name type="scientific">Methanosarcina mazei (strain ATCC BAA-159 / DSM 3647 / Goe1 / Go1 / JCM 11833 / OCM 88)</name>
    <name type="common">Methanosarcina frisia</name>
    <dbReference type="NCBI Taxonomy" id="192952"/>
    <lineage>
        <taxon>Archaea</taxon>
        <taxon>Methanobacteriati</taxon>
        <taxon>Methanobacteriota</taxon>
        <taxon>Stenosarchaea group</taxon>
        <taxon>Methanomicrobia</taxon>
        <taxon>Methanosarcinales</taxon>
        <taxon>Methanosarcinaceae</taxon>
        <taxon>Methanosarcina</taxon>
    </lineage>
</organism>
<dbReference type="EC" id="2.7.7.1" evidence="1"/>
<dbReference type="EMBL" id="AE008384">
    <property type="protein sequence ID" value="AAM30322.1"/>
    <property type="status" value="ALT_INIT"/>
    <property type="molecule type" value="Genomic_DNA"/>
</dbReference>
<dbReference type="RefSeq" id="WP_015411232.1">
    <property type="nucleotide sequence ID" value="NC_003901.1"/>
</dbReference>
<dbReference type="SMR" id="Q8PZ68"/>
<dbReference type="KEGG" id="mma:MM_0626"/>
<dbReference type="PATRIC" id="fig|192952.21.peg.738"/>
<dbReference type="eggNOG" id="arCOG00972">
    <property type="taxonomic scope" value="Archaea"/>
</dbReference>
<dbReference type="HOGENOM" id="CLU_108783_0_0_2"/>
<dbReference type="UniPathway" id="UPA00253">
    <property type="reaction ID" value="UER00600"/>
</dbReference>
<dbReference type="Proteomes" id="UP000000595">
    <property type="component" value="Chromosome"/>
</dbReference>
<dbReference type="GO" id="GO:0005737">
    <property type="term" value="C:cytoplasm"/>
    <property type="evidence" value="ECO:0007669"/>
    <property type="project" value="UniProtKB-SubCell"/>
</dbReference>
<dbReference type="GO" id="GO:0005524">
    <property type="term" value="F:ATP binding"/>
    <property type="evidence" value="ECO:0007669"/>
    <property type="project" value="UniProtKB-KW"/>
</dbReference>
<dbReference type="GO" id="GO:0000309">
    <property type="term" value="F:nicotinamide-nucleotide adenylyltransferase activity"/>
    <property type="evidence" value="ECO:0007669"/>
    <property type="project" value="UniProtKB-UniRule"/>
</dbReference>
<dbReference type="GO" id="GO:0009435">
    <property type="term" value="P:NAD biosynthetic process"/>
    <property type="evidence" value="ECO:0007669"/>
    <property type="project" value="UniProtKB-UniRule"/>
</dbReference>
<dbReference type="CDD" id="cd02166">
    <property type="entry name" value="NMNAT_Archaea"/>
    <property type="match status" value="1"/>
</dbReference>
<dbReference type="Gene3D" id="3.40.50.620">
    <property type="entry name" value="HUPs"/>
    <property type="match status" value="1"/>
</dbReference>
<dbReference type="HAMAP" id="MF_00243">
    <property type="entry name" value="NMN_adenylyltr"/>
    <property type="match status" value="1"/>
</dbReference>
<dbReference type="InterPro" id="IPR004821">
    <property type="entry name" value="Cyt_trans-like"/>
</dbReference>
<dbReference type="InterPro" id="IPR006418">
    <property type="entry name" value="NMN_Atrans_arc"/>
</dbReference>
<dbReference type="InterPro" id="IPR014729">
    <property type="entry name" value="Rossmann-like_a/b/a_fold"/>
</dbReference>
<dbReference type="NCBIfam" id="TIGR01527">
    <property type="entry name" value="arch_NMN_Atrans"/>
    <property type="match status" value="1"/>
</dbReference>
<dbReference type="NCBIfam" id="TIGR00125">
    <property type="entry name" value="cyt_tran_rel"/>
    <property type="match status" value="1"/>
</dbReference>
<dbReference type="NCBIfam" id="NF002243">
    <property type="entry name" value="PRK01153.1"/>
    <property type="match status" value="1"/>
</dbReference>
<dbReference type="PANTHER" id="PTHR21342:SF0">
    <property type="entry name" value="BIFUNCTIONAL NMN ADENYLYLTRANSFERASE_NUDIX HYDROLASE"/>
    <property type="match status" value="1"/>
</dbReference>
<dbReference type="PANTHER" id="PTHR21342">
    <property type="entry name" value="PHOSPHOPANTETHEINE ADENYLYLTRANSFERASE"/>
    <property type="match status" value="1"/>
</dbReference>
<dbReference type="Pfam" id="PF01467">
    <property type="entry name" value="CTP_transf_like"/>
    <property type="match status" value="1"/>
</dbReference>
<dbReference type="SUPFAM" id="SSF52374">
    <property type="entry name" value="Nucleotidylyl transferase"/>
    <property type="match status" value="1"/>
</dbReference>
<protein>
    <recommendedName>
        <fullName evidence="1">Nicotinamide-nucleotide adenylyltransferase</fullName>
        <ecNumber evidence="1">2.7.7.1</ecNumber>
    </recommendedName>
    <alternativeName>
        <fullName evidence="1">NAD(+) diphosphorylase</fullName>
    </alternativeName>
    <alternativeName>
        <fullName evidence="1">NAD(+) pyrophosphorylase</fullName>
    </alternativeName>
    <alternativeName>
        <fullName evidence="1">NMN adenylyltransferase</fullName>
    </alternativeName>
</protein>
<keyword id="KW-0067">ATP-binding</keyword>
<keyword id="KW-0963">Cytoplasm</keyword>
<keyword id="KW-0520">NAD</keyword>
<keyword id="KW-0547">Nucleotide-binding</keyword>
<keyword id="KW-0548">Nucleotidyltransferase</keyword>
<keyword id="KW-0662">Pyridine nucleotide biosynthesis</keyword>
<keyword id="KW-0808">Transferase</keyword>
<sequence length="173" mass="19970">MTRAFYIGRFQPYHFGHHAVIARIAEEVDELVIGIGSAQKSHEAIDPFTAGERVLMVYNALEHLSIRHYVVPIEDVRYNSIWVHHVVSRTPRFDVVYSNNPLVIQLFREAGFCVKESPLYVRERYSGTEIRRRMIEGEKWEHLVPKPVAEVIKSFDGVSRLKNVSTSDSNFSL</sequence>
<evidence type="ECO:0000255" key="1">
    <source>
        <dbReference type="HAMAP-Rule" id="MF_00243"/>
    </source>
</evidence>
<evidence type="ECO:0000305" key="2"/>
<comment type="catalytic activity">
    <reaction evidence="1">
        <text>beta-nicotinamide D-ribonucleotide + ATP + H(+) = diphosphate + NAD(+)</text>
        <dbReference type="Rhea" id="RHEA:21360"/>
        <dbReference type="ChEBI" id="CHEBI:14649"/>
        <dbReference type="ChEBI" id="CHEBI:15378"/>
        <dbReference type="ChEBI" id="CHEBI:30616"/>
        <dbReference type="ChEBI" id="CHEBI:33019"/>
        <dbReference type="ChEBI" id="CHEBI:57540"/>
        <dbReference type="EC" id="2.7.7.1"/>
    </reaction>
</comment>
<comment type="pathway">
    <text evidence="1">Cofactor biosynthesis; NAD(+) biosynthesis; NAD(+) from nicotinamide D-ribonucleotide: step 1/1.</text>
</comment>
<comment type="subcellular location">
    <subcellularLocation>
        <location evidence="1">Cytoplasm</location>
    </subcellularLocation>
</comment>
<comment type="similarity">
    <text evidence="1">Belongs to the archaeal NMN adenylyltransferase family.</text>
</comment>
<comment type="sequence caution" evidence="2">
    <conflict type="erroneous initiation">
        <sequence resource="EMBL-CDS" id="AAM30322"/>
    </conflict>
</comment>
<proteinExistence type="inferred from homology"/>
<name>NADM_METMA</name>
<accession>Q8PZ68</accession>
<gene>
    <name type="ordered locus">MM_0626</name>
</gene>